<dbReference type="EMBL" id="AK146358">
    <property type="protein sequence ID" value="BAE27110.1"/>
    <property type="molecule type" value="mRNA"/>
</dbReference>
<dbReference type="EMBL" id="BC058777">
    <property type="protein sequence ID" value="AAH58777.1"/>
    <property type="molecule type" value="mRNA"/>
</dbReference>
<dbReference type="CCDS" id="CCDS17961.1"/>
<dbReference type="RefSeq" id="NP_080281.3">
    <property type="nucleotide sequence ID" value="NM_026005.3"/>
</dbReference>
<dbReference type="SMR" id="Q3UJP5"/>
<dbReference type="BioGRID" id="211983">
    <property type="interactions" value="1"/>
</dbReference>
<dbReference type="FunCoup" id="Q3UJP5">
    <property type="interactions" value="816"/>
</dbReference>
<dbReference type="STRING" id="10090.ENSMUSP00000079361"/>
<dbReference type="PhosphoSitePlus" id="Q3UJP5"/>
<dbReference type="SwissPalm" id="Q3UJP5"/>
<dbReference type="PaxDb" id="10090-ENSMUSP00000103966"/>
<dbReference type="PeptideAtlas" id="Q3UJP5"/>
<dbReference type="Pumba" id="Q3UJP5"/>
<dbReference type="Antibodypedia" id="12959">
    <property type="antibodies" value="40 antibodies from 8 providers"/>
</dbReference>
<dbReference type="Ensembl" id="ENSMUST00000080517.14">
    <property type="protein sequence ID" value="ENSMUSP00000079361.8"/>
    <property type="gene ID" value="ENSMUSG00000059482.16"/>
</dbReference>
<dbReference type="GeneID" id="67157"/>
<dbReference type="KEGG" id="mmu:67157"/>
<dbReference type="UCSC" id="uc012dam.1">
    <property type="organism name" value="mouse"/>
</dbReference>
<dbReference type="AGR" id="MGI:1914407"/>
<dbReference type="CTD" id="157657"/>
<dbReference type="MGI" id="MGI:1914407">
    <property type="gene designation" value="Cfap418"/>
</dbReference>
<dbReference type="VEuPathDB" id="HostDB:ENSMUSG00000059482"/>
<dbReference type="eggNOG" id="ENOG502S1KM">
    <property type="taxonomic scope" value="Eukaryota"/>
</dbReference>
<dbReference type="GeneTree" id="ENSGT00390000006173"/>
<dbReference type="HOGENOM" id="CLU_092833_0_0_1"/>
<dbReference type="InParanoid" id="Q3UJP5"/>
<dbReference type="OrthoDB" id="20230at9989"/>
<dbReference type="BioGRID-ORCS" id="67157">
    <property type="hits" value="3 hits in 78 CRISPR screens"/>
</dbReference>
<dbReference type="PRO" id="PR:Q3UJP5"/>
<dbReference type="Proteomes" id="UP000000589">
    <property type="component" value="Chromosome 4"/>
</dbReference>
<dbReference type="RNAct" id="Q3UJP5">
    <property type="molecule type" value="protein"/>
</dbReference>
<dbReference type="Bgee" id="ENSMUSG00000059482">
    <property type="expression patterns" value="Expressed in spermatocyte and 240 other cell types or tissues"/>
</dbReference>
<dbReference type="ExpressionAtlas" id="Q3UJP5">
    <property type="expression patterns" value="baseline and differential"/>
</dbReference>
<dbReference type="GO" id="GO:0005737">
    <property type="term" value="C:cytoplasm"/>
    <property type="evidence" value="ECO:0000314"/>
    <property type="project" value="UniProtKB"/>
</dbReference>
<dbReference type="GO" id="GO:0001917">
    <property type="term" value="C:photoreceptor inner segment"/>
    <property type="evidence" value="ECO:0000314"/>
    <property type="project" value="UniProtKB"/>
</dbReference>
<dbReference type="GO" id="GO:0008594">
    <property type="term" value="P:photoreceptor cell morphogenesis"/>
    <property type="evidence" value="ECO:0000315"/>
    <property type="project" value="UniProtKB"/>
</dbReference>
<dbReference type="InterPro" id="IPR029239">
    <property type="entry name" value="CFAP418"/>
</dbReference>
<dbReference type="PANTHER" id="PTHR33958:SF1">
    <property type="entry name" value="CILIA- AND FLAGELLA-ASSOCIATED PROTEIN 418"/>
    <property type="match status" value="1"/>
</dbReference>
<dbReference type="PANTHER" id="PTHR33958">
    <property type="entry name" value="PROTEIN C8ORF37"/>
    <property type="match status" value="1"/>
</dbReference>
<dbReference type="Pfam" id="PF14996">
    <property type="entry name" value="RMP"/>
    <property type="match status" value="1"/>
</dbReference>
<evidence type="ECO:0000250" key="1">
    <source>
        <dbReference type="UniProtKB" id="Q96NL8"/>
    </source>
</evidence>
<evidence type="ECO:0000256" key="2">
    <source>
        <dbReference type="SAM" id="MobiDB-lite"/>
    </source>
</evidence>
<evidence type="ECO:0000269" key="3">
    <source>
    </source>
</evidence>
<evidence type="ECO:0000269" key="4">
    <source>
    </source>
</evidence>
<evidence type="ECO:0000305" key="5"/>
<evidence type="ECO:0000312" key="6">
    <source>
        <dbReference type="MGI" id="MGI:1914407"/>
    </source>
</evidence>
<reference key="1">
    <citation type="journal article" date="2005" name="Science">
        <title>The transcriptional landscape of the mammalian genome.</title>
        <authorList>
            <person name="Carninci P."/>
            <person name="Kasukawa T."/>
            <person name="Katayama S."/>
            <person name="Gough J."/>
            <person name="Frith M.C."/>
            <person name="Maeda N."/>
            <person name="Oyama R."/>
            <person name="Ravasi T."/>
            <person name="Lenhard B."/>
            <person name="Wells C."/>
            <person name="Kodzius R."/>
            <person name="Shimokawa K."/>
            <person name="Bajic V.B."/>
            <person name="Brenner S.E."/>
            <person name="Batalov S."/>
            <person name="Forrest A.R."/>
            <person name="Zavolan M."/>
            <person name="Davis M.J."/>
            <person name="Wilming L.G."/>
            <person name="Aidinis V."/>
            <person name="Allen J.E."/>
            <person name="Ambesi-Impiombato A."/>
            <person name="Apweiler R."/>
            <person name="Aturaliya R.N."/>
            <person name="Bailey T.L."/>
            <person name="Bansal M."/>
            <person name="Baxter L."/>
            <person name="Beisel K.W."/>
            <person name="Bersano T."/>
            <person name="Bono H."/>
            <person name="Chalk A.M."/>
            <person name="Chiu K.P."/>
            <person name="Choudhary V."/>
            <person name="Christoffels A."/>
            <person name="Clutterbuck D.R."/>
            <person name="Crowe M.L."/>
            <person name="Dalla E."/>
            <person name="Dalrymple B.P."/>
            <person name="de Bono B."/>
            <person name="Della Gatta G."/>
            <person name="di Bernardo D."/>
            <person name="Down T."/>
            <person name="Engstrom P."/>
            <person name="Fagiolini M."/>
            <person name="Faulkner G."/>
            <person name="Fletcher C.F."/>
            <person name="Fukushima T."/>
            <person name="Furuno M."/>
            <person name="Futaki S."/>
            <person name="Gariboldi M."/>
            <person name="Georgii-Hemming P."/>
            <person name="Gingeras T.R."/>
            <person name="Gojobori T."/>
            <person name="Green R.E."/>
            <person name="Gustincich S."/>
            <person name="Harbers M."/>
            <person name="Hayashi Y."/>
            <person name="Hensch T.K."/>
            <person name="Hirokawa N."/>
            <person name="Hill D."/>
            <person name="Huminiecki L."/>
            <person name="Iacono M."/>
            <person name="Ikeo K."/>
            <person name="Iwama A."/>
            <person name="Ishikawa T."/>
            <person name="Jakt M."/>
            <person name="Kanapin A."/>
            <person name="Katoh M."/>
            <person name="Kawasawa Y."/>
            <person name="Kelso J."/>
            <person name="Kitamura H."/>
            <person name="Kitano H."/>
            <person name="Kollias G."/>
            <person name="Krishnan S.P."/>
            <person name="Kruger A."/>
            <person name="Kummerfeld S.K."/>
            <person name="Kurochkin I.V."/>
            <person name="Lareau L.F."/>
            <person name="Lazarevic D."/>
            <person name="Lipovich L."/>
            <person name="Liu J."/>
            <person name="Liuni S."/>
            <person name="McWilliam S."/>
            <person name="Madan Babu M."/>
            <person name="Madera M."/>
            <person name="Marchionni L."/>
            <person name="Matsuda H."/>
            <person name="Matsuzawa S."/>
            <person name="Miki H."/>
            <person name="Mignone F."/>
            <person name="Miyake S."/>
            <person name="Morris K."/>
            <person name="Mottagui-Tabar S."/>
            <person name="Mulder N."/>
            <person name="Nakano N."/>
            <person name="Nakauchi H."/>
            <person name="Ng P."/>
            <person name="Nilsson R."/>
            <person name="Nishiguchi S."/>
            <person name="Nishikawa S."/>
            <person name="Nori F."/>
            <person name="Ohara O."/>
            <person name="Okazaki Y."/>
            <person name="Orlando V."/>
            <person name="Pang K.C."/>
            <person name="Pavan W.J."/>
            <person name="Pavesi G."/>
            <person name="Pesole G."/>
            <person name="Petrovsky N."/>
            <person name="Piazza S."/>
            <person name="Reed J."/>
            <person name="Reid J.F."/>
            <person name="Ring B.Z."/>
            <person name="Ringwald M."/>
            <person name="Rost B."/>
            <person name="Ruan Y."/>
            <person name="Salzberg S.L."/>
            <person name="Sandelin A."/>
            <person name="Schneider C."/>
            <person name="Schoenbach C."/>
            <person name="Sekiguchi K."/>
            <person name="Semple C.A."/>
            <person name="Seno S."/>
            <person name="Sessa L."/>
            <person name="Sheng Y."/>
            <person name="Shibata Y."/>
            <person name="Shimada H."/>
            <person name="Shimada K."/>
            <person name="Silva D."/>
            <person name="Sinclair B."/>
            <person name="Sperling S."/>
            <person name="Stupka E."/>
            <person name="Sugiura K."/>
            <person name="Sultana R."/>
            <person name="Takenaka Y."/>
            <person name="Taki K."/>
            <person name="Tammoja K."/>
            <person name="Tan S.L."/>
            <person name="Tang S."/>
            <person name="Taylor M.S."/>
            <person name="Tegner J."/>
            <person name="Teichmann S.A."/>
            <person name="Ueda H.R."/>
            <person name="van Nimwegen E."/>
            <person name="Verardo R."/>
            <person name="Wei C.L."/>
            <person name="Yagi K."/>
            <person name="Yamanishi H."/>
            <person name="Zabarovsky E."/>
            <person name="Zhu S."/>
            <person name="Zimmer A."/>
            <person name="Hide W."/>
            <person name="Bult C."/>
            <person name="Grimmond S.M."/>
            <person name="Teasdale R.D."/>
            <person name="Liu E.T."/>
            <person name="Brusic V."/>
            <person name="Quackenbush J."/>
            <person name="Wahlestedt C."/>
            <person name="Mattick J.S."/>
            <person name="Hume D.A."/>
            <person name="Kai C."/>
            <person name="Sasaki D."/>
            <person name="Tomaru Y."/>
            <person name="Fukuda S."/>
            <person name="Kanamori-Katayama M."/>
            <person name="Suzuki M."/>
            <person name="Aoki J."/>
            <person name="Arakawa T."/>
            <person name="Iida J."/>
            <person name="Imamura K."/>
            <person name="Itoh M."/>
            <person name="Kato T."/>
            <person name="Kawaji H."/>
            <person name="Kawagashira N."/>
            <person name="Kawashima T."/>
            <person name="Kojima M."/>
            <person name="Kondo S."/>
            <person name="Konno H."/>
            <person name="Nakano K."/>
            <person name="Ninomiya N."/>
            <person name="Nishio T."/>
            <person name="Okada M."/>
            <person name="Plessy C."/>
            <person name="Shibata K."/>
            <person name="Shiraki T."/>
            <person name="Suzuki S."/>
            <person name="Tagami M."/>
            <person name="Waki K."/>
            <person name="Watahiki A."/>
            <person name="Okamura-Oho Y."/>
            <person name="Suzuki H."/>
            <person name="Kawai J."/>
            <person name="Hayashizaki Y."/>
        </authorList>
    </citation>
    <scope>NUCLEOTIDE SEQUENCE [LARGE SCALE MRNA]</scope>
    <source>
        <strain>BALB/cJ</strain>
    </source>
</reference>
<reference key="2">
    <citation type="journal article" date="2004" name="Genome Res.">
        <title>The status, quality, and expansion of the NIH full-length cDNA project: the Mammalian Gene Collection (MGC).</title>
        <authorList>
            <consortium name="The MGC Project Team"/>
        </authorList>
    </citation>
    <scope>NUCLEOTIDE SEQUENCE [LARGE SCALE MRNA]</scope>
    <source>
        <strain>FVB/N</strain>
        <tissue>Mammary gland</tissue>
    </source>
</reference>
<reference key="3">
    <citation type="journal article" date="2010" name="Cell">
        <title>A tissue-specific atlas of mouse protein phosphorylation and expression.</title>
        <authorList>
            <person name="Huttlin E.L."/>
            <person name="Jedrychowski M.P."/>
            <person name="Elias J.E."/>
            <person name="Goswami T."/>
            <person name="Rad R."/>
            <person name="Beausoleil S.A."/>
            <person name="Villen J."/>
            <person name="Haas W."/>
            <person name="Sowa M.E."/>
            <person name="Gygi S.P."/>
        </authorList>
    </citation>
    <scope>IDENTIFICATION BY MASS SPECTROMETRY [LARGE SCALE ANALYSIS]</scope>
    <source>
        <tissue>Brain</tissue>
        <tissue>Testis</tissue>
    </source>
</reference>
<reference key="4">
    <citation type="journal article" date="2012" name="Am. J. Hum. Genet.">
        <title>Mutations in C8orf37, encoding a ciliary protein, are associated with autosomal-recessive retinal dystrophies with early macular involvement.</title>
        <authorList>
            <person name="Estrada-Cuzcano A."/>
            <person name="Neveling K."/>
            <person name="Kohl S."/>
            <person name="Banin E."/>
            <person name="Rotenstreich Y."/>
            <person name="Sharon D."/>
            <person name="Falik-Zaccai T.C."/>
            <person name="Hipp S."/>
            <person name="Roepman R."/>
            <person name="Wissinger B."/>
            <person name="Letteboer S.J."/>
            <person name="Mans D.A."/>
            <person name="Blokland E.A."/>
            <person name="Kwint M.P."/>
            <person name="Gijsen S.J."/>
            <person name="van Huet R.A."/>
            <person name="Collin R.W."/>
            <person name="Scheffer H."/>
            <person name="Veltman J.A."/>
            <person name="Zrenner E."/>
            <person name="den Hollander A.I."/>
            <person name="Klevering B.J."/>
            <person name="Cremers F.P."/>
        </authorList>
    </citation>
    <scope>SUBCELLULAR LOCATION</scope>
    <scope>TISSUE SPECIFICITY</scope>
</reference>
<reference key="5">
    <citation type="journal article" date="2018" name="J. Neurosci.">
        <title>C8ORF37 is required for photoreceptor outer segment disc morphogenesis by maintaining outer segment membrane protein homeostasis.</title>
        <authorList>
            <person name="Sharif A.S."/>
            <person name="Yu D."/>
            <person name="Loertscher S."/>
            <person name="Austin R."/>
            <person name="Nguyen K."/>
            <person name="Mathur P.D."/>
            <person name="Clark A.M."/>
            <person name="Zou J."/>
            <person name="Lobanova E.S."/>
            <person name="Arshavsky V.Y."/>
            <person name="Yang J."/>
        </authorList>
    </citation>
    <scope>DISRUPTION PHENOTYPE</scope>
    <scope>SUBCELLULAR LOCATION</scope>
    <scope>FUNCTION</scope>
    <scope>TISSUE SPECIFICITY</scope>
</reference>
<accession>Q3UJP5</accession>
<accession>Q6PDD5</accession>
<protein>
    <recommendedName>
        <fullName evidence="6">Cilia- and flagella-associated protein 418</fullName>
    </recommendedName>
</protein>
<organism>
    <name type="scientific">Mus musculus</name>
    <name type="common">Mouse</name>
    <dbReference type="NCBI Taxonomy" id="10090"/>
    <lineage>
        <taxon>Eukaryota</taxon>
        <taxon>Metazoa</taxon>
        <taxon>Chordata</taxon>
        <taxon>Craniata</taxon>
        <taxon>Vertebrata</taxon>
        <taxon>Euteleostomi</taxon>
        <taxon>Mammalia</taxon>
        <taxon>Eutheria</taxon>
        <taxon>Euarchontoglires</taxon>
        <taxon>Glires</taxon>
        <taxon>Rodentia</taxon>
        <taxon>Myomorpha</taxon>
        <taxon>Muroidea</taxon>
        <taxon>Muridae</taxon>
        <taxon>Murinae</taxon>
        <taxon>Mus</taxon>
        <taxon>Mus</taxon>
    </lineage>
</organism>
<gene>
    <name evidence="6" type="primary">Cfap418</name>
</gene>
<feature type="chain" id="PRO_0000271059" description="Cilia- and flagella-associated protein 418">
    <location>
        <begin position="1"/>
        <end position="209"/>
    </location>
</feature>
<feature type="region of interest" description="Required for interaction with FAM161A" evidence="1">
    <location>
        <begin position="1"/>
        <end position="76"/>
    </location>
</feature>
<feature type="region of interest" description="Disordered" evidence="2">
    <location>
        <begin position="24"/>
        <end position="58"/>
    </location>
</feature>
<feature type="compositionally biased region" description="Basic and acidic residues" evidence="2">
    <location>
        <begin position="40"/>
        <end position="58"/>
    </location>
</feature>
<feature type="sequence conflict" description="In Ref. 2; AAH58777." evidence="5" ref="2">
    <original>E</original>
    <variation>D</variation>
    <location>
        <position position="11"/>
    </location>
</feature>
<comment type="function">
    <text evidence="4">May be involved in photoreceptor outer segment disk morphogenesis.</text>
</comment>
<comment type="subunit">
    <text evidence="1">Interacts (via N-terminus) with FAM161A (via central region); the interaction is direct.</text>
</comment>
<comment type="subcellular location">
    <subcellularLocation>
        <location evidence="3 4">Cytoplasm</location>
    </subcellularLocation>
    <subcellularLocation>
        <location evidence="4">Photoreceptor inner segment</location>
    </subcellularLocation>
    <text evidence="4">In the retina, located at the base of the primary cilium (PubMed:22177090). Expressed throughout photoreceptors cell body including the basal body, inner segment and synaptic terminus, but not in the outer segment (at the protein level).</text>
</comment>
<comment type="tissue specificity">
    <text evidence="3 4">Expressed in multiple tissues, including the brain, kidney, lung, spleen, heart, trachea and testis (PubMed:29440555). Expressed in the retina (at protein level) (PubMed:22177090, PubMed:29440555).</text>
</comment>
<comment type="disruption phenotype">
    <text evidence="4">No visible phenotype. However mice exhibit progressive and simultaneous degeneration of rod and cone photoreceptors (PubMed:29440555).</text>
</comment>
<sequence length="209" mass="23848">MAKDLDELLDEVETKFCRLDPLRLDLGERPKGDGGGGSHSGDRNGAQEKETLRSTETFKKEDDLDSLINEIFEEPDFDRKSFQKFKSKSSSNTCVRAPMQGVSKSCSPVYLSGSAIPCGIGTNTSQRACDRLRCVACDFRIVSYNDYMWDKSCDYLFFRNNMPEFHKLKTKLIEKKGARAYACQCSWRTVEELTDLQTDHQLRWVCGKH</sequence>
<keyword id="KW-0963">Cytoplasm</keyword>
<keyword id="KW-1185">Reference proteome</keyword>
<proteinExistence type="evidence at protein level"/>
<name>CF418_MOUSE</name>